<proteinExistence type="evidence at protein level"/>
<reference key="1">
    <citation type="journal article" date="1997" name="Plant Physiol.">
        <title>Acidic phosphoprotein complex of the 60S ribosomal subunit of maize seedling roots. Components and changes in response to flooding.</title>
        <authorList>
            <person name="Bailey-Serres J."/>
            <person name="Vangala S."/>
            <person name="Szick K."/>
            <person name="Lee C.H."/>
        </authorList>
    </citation>
    <scope>NUCLEOTIDE SEQUENCE [MRNA]</scope>
    <scope>PROTEIN SEQUENCE OF 2-17</scope>
    <source>
        <strain>cv. B73</strain>
        <tissue>Ear of corn</tissue>
    </source>
</reference>
<organism>
    <name type="scientific">Zea mays</name>
    <name type="common">Maize</name>
    <dbReference type="NCBI Taxonomy" id="4577"/>
    <lineage>
        <taxon>Eukaryota</taxon>
        <taxon>Viridiplantae</taxon>
        <taxon>Streptophyta</taxon>
        <taxon>Embryophyta</taxon>
        <taxon>Tracheophyta</taxon>
        <taxon>Spermatophyta</taxon>
        <taxon>Magnoliopsida</taxon>
        <taxon>Liliopsida</taxon>
        <taxon>Poales</taxon>
        <taxon>Poaceae</taxon>
        <taxon>PACMAD clade</taxon>
        <taxon>Panicoideae</taxon>
        <taxon>Andropogonodae</taxon>
        <taxon>Andropogoneae</taxon>
        <taxon>Tripsacinae</taxon>
        <taxon>Zea</taxon>
    </lineage>
</organism>
<feature type="initiator methionine" description="Removed" evidence="2">
    <location>
        <position position="1"/>
    </location>
</feature>
<feature type="chain" id="PRO_0000157670" description="Large ribosomal subunit protein P3">
    <location>
        <begin position="2"/>
        <end position="120"/>
    </location>
</feature>
<feature type="region of interest" description="Disordered" evidence="1">
    <location>
        <begin position="83"/>
        <end position="120"/>
    </location>
</feature>
<dbReference type="EMBL" id="U62751">
    <property type="protein sequence ID" value="AAB71078.1"/>
    <property type="molecule type" value="mRNA"/>
</dbReference>
<dbReference type="PIR" id="T02037">
    <property type="entry name" value="T02037"/>
</dbReference>
<dbReference type="RefSeq" id="NP_001105389.1">
    <property type="nucleotide sequence ID" value="NM_001111919.1"/>
</dbReference>
<dbReference type="FunCoup" id="O24413">
    <property type="interactions" value="874"/>
</dbReference>
<dbReference type="STRING" id="4577.O24413"/>
<dbReference type="PaxDb" id="4577-GRMZM2G378770_P01"/>
<dbReference type="GeneID" id="542339"/>
<dbReference type="KEGG" id="zma:542339"/>
<dbReference type="InParanoid" id="O24413"/>
<dbReference type="OrthoDB" id="2015129at2759"/>
<dbReference type="Proteomes" id="UP000007305">
    <property type="component" value="Unplaced"/>
</dbReference>
<dbReference type="ExpressionAtlas" id="O24413">
    <property type="expression patterns" value="baseline and differential"/>
</dbReference>
<dbReference type="GO" id="GO:0022625">
    <property type="term" value="C:cytosolic large ribosomal subunit"/>
    <property type="evidence" value="ECO:0000314"/>
    <property type="project" value="AgBase"/>
</dbReference>
<dbReference type="GO" id="GO:0044877">
    <property type="term" value="F:protein-containing complex binding"/>
    <property type="evidence" value="ECO:0000314"/>
    <property type="project" value="AgBase"/>
</dbReference>
<dbReference type="GO" id="GO:0003735">
    <property type="term" value="F:structural constituent of ribosome"/>
    <property type="evidence" value="ECO:0000304"/>
    <property type="project" value="AgBase"/>
</dbReference>
<dbReference type="GO" id="GO:0034059">
    <property type="term" value="P:response to anoxia"/>
    <property type="evidence" value="ECO:0000314"/>
    <property type="project" value="AgBase"/>
</dbReference>
<dbReference type="GO" id="GO:0006414">
    <property type="term" value="P:translational elongation"/>
    <property type="evidence" value="ECO:0007669"/>
    <property type="project" value="InterPro"/>
</dbReference>
<dbReference type="HAMAP" id="MF_01478">
    <property type="entry name" value="Ribosomal_L12_arch"/>
    <property type="match status" value="1"/>
</dbReference>
<dbReference type="InterPro" id="IPR027534">
    <property type="entry name" value="Ribosomal_P1/P2"/>
</dbReference>
<dbReference type="InterPro" id="IPR044252">
    <property type="entry name" value="RPP3"/>
</dbReference>
<dbReference type="PANTHER" id="PTHR47207">
    <property type="entry name" value="60S ACIDIC RIBOSOMAL PROTEIN P3-1-RELATED"/>
    <property type="match status" value="1"/>
</dbReference>
<dbReference type="PANTHER" id="PTHR47207:SF2">
    <property type="entry name" value="LARGE RIBOSOMAL SUBUNIT PROTEIN P3Y-RELATED"/>
    <property type="match status" value="1"/>
</dbReference>
<dbReference type="Pfam" id="PF00428">
    <property type="entry name" value="Ribosomal_60s"/>
    <property type="match status" value="1"/>
</dbReference>
<accession>O24413</accession>
<protein>
    <recommendedName>
        <fullName evidence="3">Large ribosomal subunit protein P3</fullName>
    </recommendedName>
    <alternativeName>
        <fullName>60S acidic ribosomal protein P3</fullName>
    </alternativeName>
    <alternativeName>
        <fullName>P1/P2-like</fullName>
    </alternativeName>
    <alternativeName>
        <fullName>P3A</fullName>
    </alternativeName>
</protein>
<evidence type="ECO:0000256" key="1">
    <source>
        <dbReference type="SAM" id="MobiDB-lite"/>
    </source>
</evidence>
<evidence type="ECO:0000269" key="2">
    <source>
    </source>
</evidence>
<evidence type="ECO:0000305" key="3"/>
<keyword id="KW-0903">Direct protein sequencing</keyword>
<keyword id="KW-0597">Phosphoprotein</keyword>
<keyword id="KW-1185">Reference proteome</keyword>
<keyword id="KW-0687">Ribonucleoprotein</keyword>
<keyword id="KW-0689">Ribosomal protein</keyword>
<gene>
    <name type="primary">RPP3A</name>
</gene>
<sequence length="120" mass="12219">MGVYTFVCRNNGGEWTAKQHSGEIEASAATPYELQRRLVAAASAADSRYGVQSSFSMVTPSSAVFQVIVGAVGGGAMMVSGGGGGGAAASGGAAAEAPKEEKKEEEKEESDDDMGFSLFD</sequence>
<comment type="function">
    <text>Plays an important role in the elongation step of protein synthesis.</text>
</comment>
<comment type="PTM">
    <text>Phosphorylated.</text>
</comment>
<comment type="similarity">
    <text evidence="3">Belongs to the eukaryotic ribosomal protein P1/P2 family.</text>
</comment>
<name>RLA3_MAIZE</name>